<feature type="chain" id="PRO_0000120479" description="Glutamate-1-semialdehyde 2,1-aminomutase">
    <location>
        <begin position="1"/>
        <end position="445"/>
    </location>
</feature>
<feature type="modified residue" description="N6-(pyridoxal phosphate)lysine" evidence="1">
    <location>
        <position position="263"/>
    </location>
</feature>
<proteinExistence type="inferred from homology"/>
<reference key="1">
    <citation type="journal article" date="2004" name="Genome Res.">
        <title>Genome sequence of Haloarcula marismortui: a halophilic archaeon from the Dead Sea.</title>
        <authorList>
            <person name="Baliga N.S."/>
            <person name="Bonneau R."/>
            <person name="Facciotti M.T."/>
            <person name="Pan M."/>
            <person name="Glusman G."/>
            <person name="Deutsch E.W."/>
            <person name="Shannon P."/>
            <person name="Chiu Y."/>
            <person name="Weng R.S."/>
            <person name="Gan R.R."/>
            <person name="Hung P."/>
            <person name="Date S.V."/>
            <person name="Marcotte E."/>
            <person name="Hood L."/>
            <person name="Ng W.V."/>
        </authorList>
    </citation>
    <scope>NUCLEOTIDE SEQUENCE [LARGE SCALE GENOMIC DNA]</scope>
    <source>
        <strain>ATCC 43049 / DSM 3752 / JCM 8966 / VKM B-1809</strain>
    </source>
</reference>
<organism>
    <name type="scientific">Haloarcula marismortui (strain ATCC 43049 / DSM 3752 / JCM 8966 / VKM B-1809)</name>
    <name type="common">Halobacterium marismortui</name>
    <dbReference type="NCBI Taxonomy" id="272569"/>
    <lineage>
        <taxon>Archaea</taxon>
        <taxon>Methanobacteriati</taxon>
        <taxon>Methanobacteriota</taxon>
        <taxon>Stenosarchaea group</taxon>
        <taxon>Halobacteria</taxon>
        <taxon>Halobacteriales</taxon>
        <taxon>Haloarculaceae</taxon>
        <taxon>Haloarcula</taxon>
    </lineage>
</organism>
<gene>
    <name evidence="1" type="primary">hemL</name>
    <name type="ordered locus">rrnAC2628</name>
</gene>
<name>GSA_HALMA</name>
<sequence>MNHEQSRALYDRALSVLSGGVNSSVRATRPYPFFVEKGDGGHVIDADGNRYIDFVMGYGPLLLGHSLPEQVQSAIQQHAAEGPMYGAPTEVEVELAEFVTRHVPSVEMLRFVNSGTEATVSAVRLARGYTGRDKIVVMQSGYHGAQESTLVEGEGDHTAPSSPGIPESFAEHTLTVPFNDEEAAHEVFEEHGDDIAAVLTEPILGNYGIVHPVEGYHDTLRQLCDDHGSLLIFDEVITGFRVGGLQCAQGAFDIDPDITTFGKIVGGGFPVGAIGGKSEIIEQFTPAGDVFQSGTFSGHPVTMAAGLETLRYAAEHDVYGHVNDLGERLRAGLQDILEDQAPEYTVVGRDSMFKVIFTRDGPDSLEGQCEAGCQQQESCPRFEYCPKTGHDVTQAETERWERLFWPAMKDQGVFLTANQFESQFICDAHTGEDIENALEAYKEAI</sequence>
<protein>
    <recommendedName>
        <fullName evidence="1">Glutamate-1-semialdehyde 2,1-aminomutase</fullName>
        <shortName evidence="1">GSA</shortName>
        <ecNumber evidence="1">5.4.3.8</ecNumber>
    </recommendedName>
    <alternativeName>
        <fullName evidence="1">Glutamate-1-semialdehyde aminotransferase</fullName>
        <shortName evidence="1">GSA-AT</shortName>
    </alternativeName>
</protein>
<comment type="catalytic activity">
    <reaction evidence="1">
        <text>(S)-4-amino-5-oxopentanoate = 5-aminolevulinate</text>
        <dbReference type="Rhea" id="RHEA:14265"/>
        <dbReference type="ChEBI" id="CHEBI:57501"/>
        <dbReference type="ChEBI" id="CHEBI:356416"/>
        <dbReference type="EC" id="5.4.3.8"/>
    </reaction>
</comment>
<comment type="cofactor">
    <cofactor evidence="1">
        <name>pyridoxal 5'-phosphate</name>
        <dbReference type="ChEBI" id="CHEBI:597326"/>
    </cofactor>
</comment>
<comment type="pathway">
    <text evidence="1">Porphyrin-containing compound metabolism; protoporphyrin-IX biosynthesis; 5-aminolevulinate from L-glutamyl-tRNA(Glu): step 2/2.</text>
</comment>
<comment type="subcellular location">
    <subcellularLocation>
        <location evidence="1">Cytoplasm</location>
    </subcellularLocation>
</comment>
<comment type="similarity">
    <text evidence="1">Belongs to the class-III pyridoxal-phosphate-dependent aminotransferase family. HemL subfamily.</text>
</comment>
<evidence type="ECO:0000255" key="1">
    <source>
        <dbReference type="HAMAP-Rule" id="MF_00375"/>
    </source>
</evidence>
<keyword id="KW-0963">Cytoplasm</keyword>
<keyword id="KW-0413">Isomerase</keyword>
<keyword id="KW-0627">Porphyrin biosynthesis</keyword>
<keyword id="KW-0663">Pyridoxal phosphate</keyword>
<keyword id="KW-1185">Reference proteome</keyword>
<accession>Q5UZ90</accession>
<dbReference type="EC" id="5.4.3.8" evidence="1"/>
<dbReference type="EMBL" id="AY596297">
    <property type="protein sequence ID" value="AAV47413.1"/>
    <property type="molecule type" value="Genomic_DNA"/>
</dbReference>
<dbReference type="RefSeq" id="WP_007189527.1">
    <property type="nucleotide sequence ID" value="NZ_CP039138.1"/>
</dbReference>
<dbReference type="SMR" id="Q5UZ90"/>
<dbReference type="STRING" id="272569.rrnAC2628"/>
<dbReference type="PaxDb" id="272569-rrnAC2628"/>
<dbReference type="EnsemblBacteria" id="AAV47413">
    <property type="protein sequence ID" value="AAV47413"/>
    <property type="gene ID" value="rrnAC2628"/>
</dbReference>
<dbReference type="KEGG" id="hma:rrnAC2628"/>
<dbReference type="PATRIC" id="fig|272569.17.peg.3225"/>
<dbReference type="eggNOG" id="arCOG00918">
    <property type="taxonomic scope" value="Archaea"/>
</dbReference>
<dbReference type="HOGENOM" id="CLU_016922_1_5_2"/>
<dbReference type="UniPathway" id="UPA00251">
    <property type="reaction ID" value="UER00317"/>
</dbReference>
<dbReference type="Proteomes" id="UP000001169">
    <property type="component" value="Chromosome I"/>
</dbReference>
<dbReference type="GO" id="GO:0005737">
    <property type="term" value="C:cytoplasm"/>
    <property type="evidence" value="ECO:0007669"/>
    <property type="project" value="UniProtKB-SubCell"/>
</dbReference>
<dbReference type="GO" id="GO:0042286">
    <property type="term" value="F:glutamate-1-semialdehyde 2,1-aminomutase activity"/>
    <property type="evidence" value="ECO:0007669"/>
    <property type="project" value="UniProtKB-UniRule"/>
</dbReference>
<dbReference type="GO" id="GO:0030170">
    <property type="term" value="F:pyridoxal phosphate binding"/>
    <property type="evidence" value="ECO:0007669"/>
    <property type="project" value="InterPro"/>
</dbReference>
<dbReference type="GO" id="GO:0008483">
    <property type="term" value="F:transaminase activity"/>
    <property type="evidence" value="ECO:0007669"/>
    <property type="project" value="InterPro"/>
</dbReference>
<dbReference type="GO" id="GO:0006782">
    <property type="term" value="P:protoporphyrinogen IX biosynthetic process"/>
    <property type="evidence" value="ECO:0007669"/>
    <property type="project" value="UniProtKB-UniRule"/>
</dbReference>
<dbReference type="CDD" id="cd00610">
    <property type="entry name" value="OAT_like"/>
    <property type="match status" value="1"/>
</dbReference>
<dbReference type="FunFam" id="3.40.640.10:FF:000021">
    <property type="entry name" value="Glutamate-1-semialdehyde 2,1-aminomutase"/>
    <property type="match status" value="1"/>
</dbReference>
<dbReference type="Gene3D" id="3.90.1150.10">
    <property type="entry name" value="Aspartate Aminotransferase, domain 1"/>
    <property type="match status" value="1"/>
</dbReference>
<dbReference type="Gene3D" id="3.40.640.10">
    <property type="entry name" value="Type I PLP-dependent aspartate aminotransferase-like (Major domain)"/>
    <property type="match status" value="1"/>
</dbReference>
<dbReference type="HAMAP" id="MF_00375">
    <property type="entry name" value="HemL_aminotrans_3"/>
    <property type="match status" value="1"/>
</dbReference>
<dbReference type="InterPro" id="IPR004639">
    <property type="entry name" value="4pyrrol_synth_GluAld_NH2Trfase"/>
</dbReference>
<dbReference type="InterPro" id="IPR005814">
    <property type="entry name" value="Aminotrans_3"/>
</dbReference>
<dbReference type="InterPro" id="IPR049704">
    <property type="entry name" value="Aminotrans_3_PPA_site"/>
</dbReference>
<dbReference type="InterPro" id="IPR015424">
    <property type="entry name" value="PyrdxlP-dep_Trfase"/>
</dbReference>
<dbReference type="InterPro" id="IPR015421">
    <property type="entry name" value="PyrdxlP-dep_Trfase_major"/>
</dbReference>
<dbReference type="InterPro" id="IPR015422">
    <property type="entry name" value="PyrdxlP-dep_Trfase_small"/>
</dbReference>
<dbReference type="NCBIfam" id="NF000818">
    <property type="entry name" value="PRK00062.1"/>
    <property type="match status" value="1"/>
</dbReference>
<dbReference type="PANTHER" id="PTHR43713">
    <property type="entry name" value="GLUTAMATE-1-SEMIALDEHYDE 2,1-AMINOMUTASE"/>
    <property type="match status" value="1"/>
</dbReference>
<dbReference type="PANTHER" id="PTHR43713:SF3">
    <property type="entry name" value="GLUTAMATE-1-SEMIALDEHYDE 2,1-AMINOMUTASE 1, CHLOROPLASTIC-RELATED"/>
    <property type="match status" value="1"/>
</dbReference>
<dbReference type="Pfam" id="PF00202">
    <property type="entry name" value="Aminotran_3"/>
    <property type="match status" value="1"/>
</dbReference>
<dbReference type="SUPFAM" id="SSF53383">
    <property type="entry name" value="PLP-dependent transferases"/>
    <property type="match status" value="1"/>
</dbReference>
<dbReference type="PROSITE" id="PS00600">
    <property type="entry name" value="AA_TRANSFER_CLASS_3"/>
    <property type="match status" value="1"/>
</dbReference>